<reference key="1">
    <citation type="journal article" date="2000" name="Science">
        <title>Complete genome sequence of Neisseria meningitidis serogroup B strain MC58.</title>
        <authorList>
            <person name="Tettelin H."/>
            <person name="Saunders N.J."/>
            <person name="Heidelberg J.F."/>
            <person name="Jeffries A.C."/>
            <person name="Nelson K.E."/>
            <person name="Eisen J.A."/>
            <person name="Ketchum K.A."/>
            <person name="Hood D.W."/>
            <person name="Peden J.F."/>
            <person name="Dodson R.J."/>
            <person name="Nelson W.C."/>
            <person name="Gwinn M.L."/>
            <person name="DeBoy R.T."/>
            <person name="Peterson J.D."/>
            <person name="Hickey E.K."/>
            <person name="Haft D.H."/>
            <person name="Salzberg S.L."/>
            <person name="White O."/>
            <person name="Fleischmann R.D."/>
            <person name="Dougherty B.A."/>
            <person name="Mason T.M."/>
            <person name="Ciecko A."/>
            <person name="Parksey D.S."/>
            <person name="Blair E."/>
            <person name="Cittone H."/>
            <person name="Clark E.B."/>
            <person name="Cotton M.D."/>
            <person name="Utterback T.R."/>
            <person name="Khouri H.M."/>
            <person name="Qin H."/>
            <person name="Vamathevan J.J."/>
            <person name="Gill J."/>
            <person name="Scarlato V."/>
            <person name="Masignani V."/>
            <person name="Pizza M."/>
            <person name="Grandi G."/>
            <person name="Sun L."/>
            <person name="Smith H.O."/>
            <person name="Fraser C.M."/>
            <person name="Moxon E.R."/>
            <person name="Rappuoli R."/>
            <person name="Venter J.C."/>
        </authorList>
    </citation>
    <scope>NUCLEOTIDE SEQUENCE [LARGE SCALE GENOMIC DNA]</scope>
    <source>
        <strain>ATCC BAA-335 / MC58</strain>
    </source>
</reference>
<gene>
    <name evidence="1" type="primary">pxpA</name>
    <name type="synonym">rni3</name>
    <name type="ordered locus">NMB0228</name>
</gene>
<dbReference type="EC" id="3.5.2.9" evidence="1"/>
<dbReference type="EMBL" id="AE002098">
    <property type="protein sequence ID" value="AAF40684.1"/>
    <property type="molecule type" value="Genomic_DNA"/>
</dbReference>
<dbReference type="PIR" id="F81223">
    <property type="entry name" value="F81223"/>
</dbReference>
<dbReference type="RefSeq" id="NP_273285.1">
    <property type="nucleotide sequence ID" value="NC_003112.2"/>
</dbReference>
<dbReference type="RefSeq" id="WP_002215593.1">
    <property type="nucleotide sequence ID" value="NC_003112.2"/>
</dbReference>
<dbReference type="SMR" id="P0A0Z2"/>
<dbReference type="FunCoup" id="P0A0Z2">
    <property type="interactions" value="26"/>
</dbReference>
<dbReference type="STRING" id="122586.NMB0228"/>
<dbReference type="PaxDb" id="122586-NMB0228"/>
<dbReference type="GeneID" id="93387318"/>
<dbReference type="KEGG" id="nme:NMB0228"/>
<dbReference type="PATRIC" id="fig|122586.8.peg.290"/>
<dbReference type="HOGENOM" id="CLU_069535_0_0_4"/>
<dbReference type="InParanoid" id="P0A0Z2"/>
<dbReference type="OrthoDB" id="9773478at2"/>
<dbReference type="Proteomes" id="UP000000425">
    <property type="component" value="Chromosome"/>
</dbReference>
<dbReference type="GO" id="GO:0017168">
    <property type="term" value="F:5-oxoprolinase (ATP-hydrolyzing) activity"/>
    <property type="evidence" value="ECO:0007669"/>
    <property type="project" value="UniProtKB-UniRule"/>
</dbReference>
<dbReference type="GO" id="GO:0005524">
    <property type="term" value="F:ATP binding"/>
    <property type="evidence" value="ECO:0007669"/>
    <property type="project" value="UniProtKB-UniRule"/>
</dbReference>
<dbReference type="GO" id="GO:0005975">
    <property type="term" value="P:carbohydrate metabolic process"/>
    <property type="evidence" value="ECO:0007669"/>
    <property type="project" value="InterPro"/>
</dbReference>
<dbReference type="CDD" id="cd10800">
    <property type="entry name" value="LamB_YcsF_YbgL_like"/>
    <property type="match status" value="1"/>
</dbReference>
<dbReference type="Gene3D" id="3.20.20.370">
    <property type="entry name" value="Glycoside hydrolase/deacetylase"/>
    <property type="match status" value="1"/>
</dbReference>
<dbReference type="HAMAP" id="MF_00691">
    <property type="entry name" value="PxpA"/>
    <property type="match status" value="1"/>
</dbReference>
<dbReference type="InterPro" id="IPR011330">
    <property type="entry name" value="Glyco_hydro/deAcase_b/a-brl"/>
</dbReference>
<dbReference type="InterPro" id="IPR005501">
    <property type="entry name" value="LamB/YcsF/PxpA-like"/>
</dbReference>
<dbReference type="NCBIfam" id="NF003814">
    <property type="entry name" value="PRK05406.1-3"/>
    <property type="match status" value="1"/>
</dbReference>
<dbReference type="NCBIfam" id="NF003815">
    <property type="entry name" value="PRK05406.1-4"/>
    <property type="match status" value="1"/>
</dbReference>
<dbReference type="NCBIfam" id="NF003816">
    <property type="entry name" value="PRK05406.1-5"/>
    <property type="match status" value="1"/>
</dbReference>
<dbReference type="PANTHER" id="PTHR30292:SF0">
    <property type="entry name" value="5-OXOPROLINASE SUBUNIT A"/>
    <property type="match status" value="1"/>
</dbReference>
<dbReference type="PANTHER" id="PTHR30292">
    <property type="entry name" value="UNCHARACTERIZED PROTEIN YBGL-RELATED"/>
    <property type="match status" value="1"/>
</dbReference>
<dbReference type="Pfam" id="PF03746">
    <property type="entry name" value="LamB_YcsF"/>
    <property type="match status" value="1"/>
</dbReference>
<dbReference type="SUPFAM" id="SSF88713">
    <property type="entry name" value="Glycoside hydrolase/deacetylase"/>
    <property type="match status" value="1"/>
</dbReference>
<organism>
    <name type="scientific">Neisseria meningitidis serogroup B (strain ATCC BAA-335 / MC58)</name>
    <dbReference type="NCBI Taxonomy" id="122586"/>
    <lineage>
        <taxon>Bacteria</taxon>
        <taxon>Pseudomonadati</taxon>
        <taxon>Pseudomonadota</taxon>
        <taxon>Betaproteobacteria</taxon>
        <taxon>Neisseriales</taxon>
        <taxon>Neisseriaceae</taxon>
        <taxon>Neisseria</taxon>
    </lineage>
</organism>
<proteinExistence type="inferred from homology"/>
<accession>P0A0Z2</accession>
<accession>Q9JQN2</accession>
<name>PXPA_NEIMB</name>
<comment type="function">
    <text evidence="1">Catalyzes the cleavage of 5-oxoproline to form L-glutamate coupled to the hydrolysis of ATP to ADP and inorganic phosphate.</text>
</comment>
<comment type="catalytic activity">
    <reaction evidence="1">
        <text>5-oxo-L-proline + ATP + 2 H2O = L-glutamate + ADP + phosphate + H(+)</text>
        <dbReference type="Rhea" id="RHEA:10348"/>
        <dbReference type="ChEBI" id="CHEBI:15377"/>
        <dbReference type="ChEBI" id="CHEBI:15378"/>
        <dbReference type="ChEBI" id="CHEBI:29985"/>
        <dbReference type="ChEBI" id="CHEBI:30616"/>
        <dbReference type="ChEBI" id="CHEBI:43474"/>
        <dbReference type="ChEBI" id="CHEBI:58402"/>
        <dbReference type="ChEBI" id="CHEBI:456216"/>
        <dbReference type="EC" id="3.5.2.9"/>
    </reaction>
</comment>
<comment type="subunit">
    <text evidence="1">Forms a complex composed of PxpA, PxpB and PxpC.</text>
</comment>
<comment type="similarity">
    <text evidence="1">Belongs to the LamB/PxpA family.</text>
</comment>
<keyword id="KW-0067">ATP-binding</keyword>
<keyword id="KW-0378">Hydrolase</keyword>
<keyword id="KW-0547">Nucleotide-binding</keyword>
<keyword id="KW-1185">Reference proteome</keyword>
<sequence>MKQVDLNADLAEGCGSDEALLQLITSANIACAQHAGSIADIRAALAYAQQNGVRIGAHPGYPDRENFGRTEMNLSEADLRACLNYQLGALQALCRDQGLEMAYVKPHGAMYNQAAKNRALADTVARIVADFDPKLKLMALSGSLLLEAGKAAGLGVISEVFADRRYMPDGTLVPRSRPDAQVDSDEEAIAQVLQMVRDGQVKAVDGSLVAVQADSICLHGDGPHAVVFAEKIRQELLAAGIKVSA</sequence>
<protein>
    <recommendedName>
        <fullName evidence="1">5-oxoprolinase subunit A</fullName>
        <shortName evidence="1">5-OPase subunit A</shortName>
        <ecNumber evidence="1">3.5.2.9</ecNumber>
    </recommendedName>
    <alternativeName>
        <fullName evidence="1">5-oxoprolinase (ATP-hydrolyzing) subunit A</fullName>
    </alternativeName>
</protein>
<feature type="chain" id="PRO_0000185020" description="5-oxoprolinase subunit A">
    <location>
        <begin position="1"/>
        <end position="245"/>
    </location>
</feature>
<evidence type="ECO:0000255" key="1">
    <source>
        <dbReference type="HAMAP-Rule" id="MF_00691"/>
    </source>
</evidence>